<geneLocation type="plastid"/>
<dbReference type="EMBL" id="EU189132">
    <property type="protein sequence ID" value="ABW83688.1"/>
    <property type="molecule type" value="Genomic_DNA"/>
</dbReference>
<dbReference type="RefSeq" id="YP_001542524.1">
    <property type="nucleotide sequence ID" value="NC_009963.1"/>
</dbReference>
<dbReference type="SMR" id="A8W3B7"/>
<dbReference type="GeneID" id="5729594"/>
<dbReference type="GO" id="GO:0009512">
    <property type="term" value="C:cytochrome b6f complex"/>
    <property type="evidence" value="ECO:0007669"/>
    <property type="project" value="InterPro"/>
</dbReference>
<dbReference type="GO" id="GO:0042170">
    <property type="term" value="C:plastid membrane"/>
    <property type="evidence" value="ECO:0007669"/>
    <property type="project" value="UniProtKB-SubCell"/>
</dbReference>
<dbReference type="GO" id="GO:0042651">
    <property type="term" value="C:thylakoid membrane"/>
    <property type="evidence" value="ECO:0007669"/>
    <property type="project" value="UniProtKB-UniRule"/>
</dbReference>
<dbReference type="GO" id="GO:0045158">
    <property type="term" value="F:electron transporter, transferring electrons within cytochrome b6/f complex of photosystem II activity"/>
    <property type="evidence" value="ECO:0007669"/>
    <property type="project" value="InterPro"/>
</dbReference>
<dbReference type="GO" id="GO:0017004">
    <property type="term" value="P:cytochrome complex assembly"/>
    <property type="evidence" value="ECO:0007669"/>
    <property type="project" value="UniProtKB-UniRule"/>
</dbReference>
<dbReference type="GO" id="GO:0015979">
    <property type="term" value="P:photosynthesis"/>
    <property type="evidence" value="ECO:0007669"/>
    <property type="project" value="UniProtKB-KW"/>
</dbReference>
<dbReference type="HAMAP" id="MF_00395">
    <property type="entry name" value="Cytb6_f_PetN"/>
    <property type="match status" value="1"/>
</dbReference>
<dbReference type="InterPro" id="IPR036143">
    <property type="entry name" value="Cytochr_b6-f_cplx_su8_sf"/>
</dbReference>
<dbReference type="InterPro" id="IPR005497">
    <property type="entry name" value="Cytochrome_b6-f_cplx_su8"/>
</dbReference>
<dbReference type="Pfam" id="PF03742">
    <property type="entry name" value="PetN"/>
    <property type="match status" value="1"/>
</dbReference>
<dbReference type="SUPFAM" id="SSF103451">
    <property type="entry name" value="PetN subunit of the cytochrome b6f complex"/>
    <property type="match status" value="1"/>
</dbReference>
<feature type="chain" id="PRO_0000355432" description="Cytochrome b6-f complex subunit 8">
    <location>
        <begin position="1"/>
        <end position="29"/>
    </location>
</feature>
<feature type="transmembrane region" description="Helical" evidence="1">
    <location>
        <begin position="3"/>
        <end position="23"/>
    </location>
</feature>
<comment type="function">
    <text evidence="1">Component of the cytochrome b6-f complex, which mediates electron transfer between photosystem II (PSII) and photosystem I (PSI), cyclic electron flow around PSI, and state transitions.</text>
</comment>
<comment type="subunit">
    <text evidence="1">The 4 large subunits of the cytochrome b6-f complex are cytochrome b6, subunit IV (17 kDa polypeptide, PetD), cytochrome f and the Rieske protein, while the 4 small subunits are PetG, PetL, PetM and PetN. The complex functions as a dimer.</text>
</comment>
<comment type="subcellular location">
    <subcellularLocation>
        <location evidence="2">Plastid membrane</location>
        <topology evidence="1">Single-pass membrane protein</topology>
    </subcellularLocation>
</comment>
<comment type="similarity">
    <text evidence="1">Belongs to the PetN family.</text>
</comment>
<comment type="caution">
    <text evidence="2">Young tissue from this organism is photosynthetic and contains some thylakoids, although the photosynthetic activity does not exceed the light compensation point.</text>
</comment>
<evidence type="ECO:0000255" key="1">
    <source>
        <dbReference type="HAMAP-Rule" id="MF_00395"/>
    </source>
</evidence>
<evidence type="ECO:0000305" key="2"/>
<keyword id="KW-0249">Electron transport</keyword>
<keyword id="KW-0472">Membrane</keyword>
<keyword id="KW-0602">Photosynthesis</keyword>
<keyword id="KW-0934">Plastid</keyword>
<keyword id="KW-0812">Transmembrane</keyword>
<keyword id="KW-1133">Transmembrane helix</keyword>
<keyword id="KW-0813">Transport</keyword>
<reference key="1">
    <citation type="journal article" date="2007" name="BMC Plant Biol.">
        <title>Complete plastid genome sequences suggest strong selection for retention of photosynthetic genes in the parasitic plant genus Cuscuta.</title>
        <authorList>
            <person name="McNeal J.R."/>
            <person name="Kuehl J.V."/>
            <person name="Boore J.L."/>
            <person name="dePamphilis C.W."/>
        </authorList>
    </citation>
    <scope>NUCLEOTIDE SEQUENCE [LARGE SCALE GENOMIC DNA]</scope>
</reference>
<gene>
    <name evidence="1" type="primary">petN</name>
</gene>
<name>PETN_CUSEX</name>
<organism>
    <name type="scientific">Cuscuta exaltata</name>
    <name type="common">Tall dodder</name>
    <dbReference type="NCBI Taxonomy" id="476139"/>
    <lineage>
        <taxon>Eukaryota</taxon>
        <taxon>Viridiplantae</taxon>
        <taxon>Streptophyta</taxon>
        <taxon>Embryophyta</taxon>
        <taxon>Tracheophyta</taxon>
        <taxon>Spermatophyta</taxon>
        <taxon>Magnoliopsida</taxon>
        <taxon>eudicotyledons</taxon>
        <taxon>Gunneridae</taxon>
        <taxon>Pentapetalae</taxon>
        <taxon>asterids</taxon>
        <taxon>lamiids</taxon>
        <taxon>Solanales</taxon>
        <taxon>Convolvulaceae</taxon>
        <taxon>Cuscuteae</taxon>
        <taxon>Cuscuta</taxon>
        <taxon>Cuscuta subgen. Monogynella</taxon>
    </lineage>
</organism>
<protein>
    <recommendedName>
        <fullName evidence="1">Cytochrome b6-f complex subunit 8</fullName>
    </recommendedName>
    <alternativeName>
        <fullName evidence="1">Cytochrome b6-f complex subunit PetN</fullName>
    </alternativeName>
    <alternativeName>
        <fullName evidence="1">Cytochrome b6-f complex subunit VIII</fullName>
    </alternativeName>
</protein>
<accession>A8W3B7</accession>
<proteinExistence type="inferred from homology"/>
<sequence>MDIVSLAWAALMIVFTFSLSLVVWGRSGL</sequence>